<evidence type="ECO:0000250" key="1">
    <source>
        <dbReference type="UniProtKB" id="P16636"/>
    </source>
</evidence>
<evidence type="ECO:0000250" key="2">
    <source>
        <dbReference type="UniProtKB" id="P28301"/>
    </source>
</evidence>
<evidence type="ECO:0000250" key="3">
    <source>
        <dbReference type="UniProtKB" id="P33072"/>
    </source>
</evidence>
<evidence type="ECO:0000255" key="4"/>
<evidence type="ECO:0000256" key="5">
    <source>
        <dbReference type="SAM" id="MobiDB-lite"/>
    </source>
</evidence>
<evidence type="ECO:0000269" key="6">
    <source>
    </source>
</evidence>
<evidence type="ECO:0000269" key="7">
    <source>
    </source>
</evidence>
<evidence type="ECO:0000269" key="8">
    <source>
    </source>
</evidence>
<evidence type="ECO:0000269" key="9">
    <source>
    </source>
</evidence>
<evidence type="ECO:0000269" key="10">
    <source>
    </source>
</evidence>
<evidence type="ECO:0000269" key="11">
    <source>
    </source>
</evidence>
<evidence type="ECO:0000269" key="12">
    <source>
    </source>
</evidence>
<evidence type="ECO:0000269" key="13">
    <source>
    </source>
</evidence>
<evidence type="ECO:0000305" key="14"/>
<evidence type="ECO:0000305" key="15">
    <source>
    </source>
</evidence>
<reference key="1">
    <citation type="journal article" date="1991" name="Genomics">
        <title>Molecular cloning of human lysyl oxidase and assignment of the gene to chromosome 5q23.3-31.2.</title>
        <authorList>
            <person name="Haemaelaeinen E.-R."/>
            <person name="Jones T.A."/>
            <person name="Sheer D."/>
            <person name="Taskinen K."/>
            <person name="Pihlajaniemi T."/>
            <person name="Kivirikko K.I."/>
        </authorList>
    </citation>
    <scope>NUCLEOTIDE SEQUENCE [MRNA]</scope>
</reference>
<reference key="2">
    <citation type="journal article" date="1992" name="Matrix">
        <title>The complete derived amino acid sequence of human lysyl oxidase and assignment of the gene to chromosome 5 (extensive sequence homology with the murine ras recision gene).</title>
        <authorList>
            <person name="Mariani T.J."/>
            <person name="Trackman P.C."/>
            <person name="Kagan H.M."/>
            <person name="Eddy R.L."/>
            <person name="Shows T.B."/>
            <person name="Boyd C.D."/>
            <person name="Deak S.B."/>
        </authorList>
    </citation>
    <scope>NUCLEOTIDE SEQUENCE [MRNA]</scope>
    <source>
        <tissue>Skin</tissue>
    </source>
</reference>
<reference key="3">
    <citation type="journal article" date="1995" name="J. Biol. Chem.">
        <title>A new gene with sequence and structural similarity to the gene encoding human lysyl oxidase.</title>
        <authorList>
            <person name="Kim Y."/>
            <person name="Boyd C.D."/>
            <person name="Csiszar K."/>
        </authorList>
    </citation>
    <scope>NUCLEOTIDE SEQUENCE [MRNA]</scope>
    <scope>TISSUE SPECIFICITY</scope>
</reference>
<reference key="4">
    <citation type="journal article" date="1999" name="Mol. Cell. Biochem.">
        <title>Epigenetic inhibition of lysyl oxidase transcription after transformation by ras oncogene.</title>
        <authorList>
            <person name="Contente S."/>
            <person name="Kenyon K."/>
            <person name="Sriraman P."/>
            <person name="Subramanyan S."/>
            <person name="Friedman R.M."/>
        </authorList>
    </citation>
    <scope>NUCLEOTIDE SEQUENCE [MRNA]</scope>
</reference>
<reference key="5">
    <citation type="journal article" date="2004" name="Nat. Genet.">
        <title>Complete sequencing and characterization of 21,243 full-length human cDNAs.</title>
        <authorList>
            <person name="Ota T."/>
            <person name="Suzuki Y."/>
            <person name="Nishikawa T."/>
            <person name="Otsuki T."/>
            <person name="Sugiyama T."/>
            <person name="Irie R."/>
            <person name="Wakamatsu A."/>
            <person name="Hayashi K."/>
            <person name="Sato H."/>
            <person name="Nagai K."/>
            <person name="Kimura K."/>
            <person name="Makita H."/>
            <person name="Sekine M."/>
            <person name="Obayashi M."/>
            <person name="Nishi T."/>
            <person name="Shibahara T."/>
            <person name="Tanaka T."/>
            <person name="Ishii S."/>
            <person name="Yamamoto J."/>
            <person name="Saito K."/>
            <person name="Kawai Y."/>
            <person name="Isono Y."/>
            <person name="Nakamura Y."/>
            <person name="Nagahari K."/>
            <person name="Murakami K."/>
            <person name="Yasuda T."/>
            <person name="Iwayanagi T."/>
            <person name="Wagatsuma M."/>
            <person name="Shiratori A."/>
            <person name="Sudo H."/>
            <person name="Hosoiri T."/>
            <person name="Kaku Y."/>
            <person name="Kodaira H."/>
            <person name="Kondo H."/>
            <person name="Sugawara M."/>
            <person name="Takahashi M."/>
            <person name="Kanda K."/>
            <person name="Yokoi T."/>
            <person name="Furuya T."/>
            <person name="Kikkawa E."/>
            <person name="Omura Y."/>
            <person name="Abe K."/>
            <person name="Kamihara K."/>
            <person name="Katsuta N."/>
            <person name="Sato K."/>
            <person name="Tanikawa M."/>
            <person name="Yamazaki M."/>
            <person name="Ninomiya K."/>
            <person name="Ishibashi T."/>
            <person name="Yamashita H."/>
            <person name="Murakawa K."/>
            <person name="Fujimori K."/>
            <person name="Tanai H."/>
            <person name="Kimata M."/>
            <person name="Watanabe M."/>
            <person name="Hiraoka S."/>
            <person name="Chiba Y."/>
            <person name="Ishida S."/>
            <person name="Ono Y."/>
            <person name="Takiguchi S."/>
            <person name="Watanabe S."/>
            <person name="Yosida M."/>
            <person name="Hotuta T."/>
            <person name="Kusano J."/>
            <person name="Kanehori K."/>
            <person name="Takahashi-Fujii A."/>
            <person name="Hara H."/>
            <person name="Tanase T.-O."/>
            <person name="Nomura Y."/>
            <person name="Togiya S."/>
            <person name="Komai F."/>
            <person name="Hara R."/>
            <person name="Takeuchi K."/>
            <person name="Arita M."/>
            <person name="Imose N."/>
            <person name="Musashino K."/>
            <person name="Yuuki H."/>
            <person name="Oshima A."/>
            <person name="Sasaki N."/>
            <person name="Aotsuka S."/>
            <person name="Yoshikawa Y."/>
            <person name="Matsunawa H."/>
            <person name="Ichihara T."/>
            <person name="Shiohata N."/>
            <person name="Sano S."/>
            <person name="Moriya S."/>
            <person name="Momiyama H."/>
            <person name="Satoh N."/>
            <person name="Takami S."/>
            <person name="Terashima Y."/>
            <person name="Suzuki O."/>
            <person name="Nakagawa S."/>
            <person name="Senoh A."/>
            <person name="Mizoguchi H."/>
            <person name="Goto Y."/>
            <person name="Shimizu F."/>
            <person name="Wakebe H."/>
            <person name="Hishigaki H."/>
            <person name="Watanabe T."/>
            <person name="Sugiyama A."/>
            <person name="Takemoto M."/>
            <person name="Kawakami B."/>
            <person name="Yamazaki M."/>
            <person name="Watanabe K."/>
            <person name="Kumagai A."/>
            <person name="Itakura S."/>
            <person name="Fukuzumi Y."/>
            <person name="Fujimori Y."/>
            <person name="Komiyama M."/>
            <person name="Tashiro H."/>
            <person name="Tanigami A."/>
            <person name="Fujiwara T."/>
            <person name="Ono T."/>
            <person name="Yamada K."/>
            <person name="Fujii Y."/>
            <person name="Ozaki K."/>
            <person name="Hirao M."/>
            <person name="Ohmori Y."/>
            <person name="Kawabata A."/>
            <person name="Hikiji T."/>
            <person name="Kobatake N."/>
            <person name="Inagaki H."/>
            <person name="Ikema Y."/>
            <person name="Okamoto S."/>
            <person name="Okitani R."/>
            <person name="Kawakami T."/>
            <person name="Noguchi S."/>
            <person name="Itoh T."/>
            <person name="Shigeta K."/>
            <person name="Senba T."/>
            <person name="Matsumura K."/>
            <person name="Nakajima Y."/>
            <person name="Mizuno T."/>
            <person name="Morinaga M."/>
            <person name="Sasaki M."/>
            <person name="Togashi T."/>
            <person name="Oyama M."/>
            <person name="Hata H."/>
            <person name="Watanabe M."/>
            <person name="Komatsu T."/>
            <person name="Mizushima-Sugano J."/>
            <person name="Satoh T."/>
            <person name="Shirai Y."/>
            <person name="Takahashi Y."/>
            <person name="Nakagawa K."/>
            <person name="Okumura K."/>
            <person name="Nagase T."/>
            <person name="Nomura N."/>
            <person name="Kikuchi H."/>
            <person name="Masuho Y."/>
            <person name="Yamashita R."/>
            <person name="Nakai K."/>
            <person name="Yada T."/>
            <person name="Nakamura Y."/>
            <person name="Ohara O."/>
            <person name="Isogai T."/>
            <person name="Sugano S."/>
        </authorList>
    </citation>
    <scope>NUCLEOTIDE SEQUENCE [LARGE SCALE MRNA]</scope>
    <scope>VARIANT GLN-158</scope>
</reference>
<reference key="6">
    <citation type="journal article" date="2004" name="Genome Res.">
        <title>The status, quality, and expansion of the NIH full-length cDNA project: the Mammalian Gene Collection (MGC).</title>
        <authorList>
            <consortium name="The MGC Project Team"/>
        </authorList>
    </citation>
    <scope>NUCLEOTIDE SEQUENCE [LARGE SCALE MRNA]</scope>
    <source>
        <tissue>Lung</tissue>
    </source>
</reference>
<reference key="7">
    <citation type="journal article" date="1993" name="Genomics">
        <title>Structure of the human lysyl oxidase gene.</title>
        <authorList>
            <person name="Haemaelaeinen E.-R."/>
            <person name="Kemppainen R."/>
            <person name="Pihlajaniemi T."/>
            <person name="Kivirikko K.I."/>
        </authorList>
    </citation>
    <scope>NUCLEOTIDE SEQUENCE [GENOMIC DNA] OF 1-213</scope>
</reference>
<reference key="8">
    <citation type="journal article" date="1992" name="J. Biol. Chem.">
        <title>Characterization of the human lysyl oxidase gene locus.</title>
        <authorList>
            <person name="Svinarich D.M."/>
            <person name="Twomey T.A."/>
            <person name="Macauley S.P."/>
            <person name="Krebs C.J."/>
            <person name="Yang T.P."/>
            <person name="Krawetz S.A."/>
        </authorList>
    </citation>
    <scope>NUCLEOTIDE SEQUENCE [GENOMIC DNA] OF 55-216</scope>
    <source>
        <tissue>Blood</tissue>
    </source>
</reference>
<reference key="9">
    <citation type="journal article" date="2009" name="J. Biol. Chem.">
        <title>Differential regulation of elastic fiber formation by fibulin-4 and -5.</title>
        <authorList>
            <person name="Choudhury R."/>
            <person name="McGovern A."/>
            <person name="Ridley C."/>
            <person name="Cain S.A."/>
            <person name="Baldwin A."/>
            <person name="Wang M.C."/>
            <person name="Guo C."/>
            <person name="Mironov A. Jr."/>
            <person name="Drymoussi Z."/>
            <person name="Trump D."/>
            <person name="Shuttleworth A."/>
            <person name="Baldock C."/>
            <person name="Kielty C.M."/>
        </authorList>
    </citation>
    <scope>INTERACTION WITH EFEMP2</scope>
</reference>
<reference key="10">
    <citation type="journal article" date="2009" name="Proc. Natl. Acad. Sci. U.S.A.">
        <title>Fibulin-4 conducts proper elastogenesis via interaction with cross-linking enzyme lysyl oxidase.</title>
        <authorList>
            <person name="Horiguchi M."/>
            <person name="Inoue T."/>
            <person name="Ohbayashi T."/>
            <person name="Hirai M."/>
            <person name="Noda K."/>
            <person name="Marmorstein L.Y."/>
            <person name="Yabe D."/>
            <person name="Takagi K."/>
            <person name="Akama T.O."/>
            <person name="Kita T."/>
            <person name="Kimura T."/>
            <person name="Nakamura T."/>
        </authorList>
    </citation>
    <scope>INTERACTION WITH EFEMP2</scope>
</reference>
<reference key="11">
    <citation type="journal article" date="2016" name="J. Biol. Chem.">
        <title>Characterization of microfibrillar-associated protein 4 (MFAP4) as a tropoelastin- and fibrillin-binding protein involved in elastic fiber formation.</title>
        <authorList>
            <person name="Pilecki B."/>
            <person name="Holm A.T."/>
            <person name="Schlosser A."/>
            <person name="Moeller J.B."/>
            <person name="Wohl A.P."/>
            <person name="Zuk A.V."/>
            <person name="Heumueller S.E."/>
            <person name="Wallis R."/>
            <person name="Moestrup S.K."/>
            <person name="Sengle G."/>
            <person name="Holmskov U."/>
            <person name="Sorensen G.L."/>
        </authorList>
    </citation>
    <scope>INTERACTION WITH MFAP4</scope>
</reference>
<reference key="12">
    <citation type="journal article" date="2019" name="J. Biol. Chem.">
        <title>Differential cleavage of lysyl oxidase by the metalloproteinases BMP1 and ADAMTS2/14 regulates collagen binding through a tyrosine sulfate domain.</title>
        <authorList>
            <person name="Rosell-Garcia T."/>
            <person name="Paradela A."/>
            <person name="Bravo G."/>
            <person name="Dupont L."/>
            <person name="Bekhouche M."/>
            <person name="Colige A."/>
            <person name="Rodriguez-Pascual F."/>
        </authorList>
    </citation>
    <scope>IDENTIFICATION BY MASS SPECTROMETRY</scope>
    <scope>CATALYTIC ACTIVITY</scope>
    <scope>SUBCELLULAR LOCATION</scope>
    <scope>PROTEOLYTIC CLEAVAGE</scope>
    <scope>SULFATION AT TYR-187</scope>
    <scope>MUTAGENESIS OF 183-TYR-TYR-184; 186-TYR-TYR-187 AND TYR-190</scope>
</reference>
<reference key="13">
    <citation type="journal article" date="1993" name="Genomics">
        <title>A restriction fragment length polymorphism results in a nonconservative amino acid substitution encoded within the first exon of the human lysyl oxidase gene.</title>
        <authorList>
            <person name="Csiszar K."/>
            <person name="Mariani T.J."/>
            <person name="Gosin J.S."/>
            <person name="Deak S.B."/>
            <person name="Boyd C.D."/>
        </authorList>
    </citation>
    <scope>VARIANT GLN-158</scope>
</reference>
<reference key="14">
    <citation type="journal article" date="2016" name="Circ. Res.">
        <title>LOX mutations predispose to thoracic aortic aneurysms and dissections.</title>
        <authorList>
            <consortium name="University of Washington Center for Mendelian Genomics"/>
            <person name="Guo D.C."/>
            <person name="Regalado E.S."/>
            <person name="Gong L."/>
            <person name="Duan X."/>
            <person name="Santos-Cortez R.L."/>
            <person name="Arnaud P."/>
            <person name="Ren Z."/>
            <person name="Cai B."/>
            <person name="Hostetler E.M."/>
            <person name="Moran R."/>
            <person name="Liang D."/>
            <person name="Estrera A."/>
            <person name="Safi H.J."/>
            <person name="Leal S.M."/>
            <person name="Bamshad M.J."/>
            <person name="Shendure J."/>
            <person name="Nickerson D.A."/>
            <person name="Jondeau G."/>
            <person name="Boileau C."/>
            <person name="Milewicz D.M."/>
        </authorList>
    </citation>
    <scope>VARIANTS AAT10 THR-79; PHE-154; ILE-248; PRO-267; ILE-280 AND ARG-348</scope>
    <scope>CHARACTERIZATION OF VARIANTS AAT10 THR-79; PHE-154; ILE-248; PRO-267; ARG-280 AND ARG-348</scope>
    <scope>INVOLVEMENT IN AAT10</scope>
    <scope>FUNCTION</scope>
    <scope>CATALYTIC ACTIVITY</scope>
</reference>
<reference key="15">
    <citation type="journal article" date="2016" name="Proc. Natl. Acad. Sci. U.S.A.">
        <title>Loss of function mutation in LOX causes thoracic aortic aneurysm and dissection in humans.</title>
        <authorList>
            <consortium name="Brigham Genomic Medicine"/>
            <person name="Lee V.S."/>
            <person name="Halabi C.M."/>
            <person name="Hoffman E.P."/>
            <person name="Carmichael N."/>
            <person name="Leshchiner I."/>
            <person name="Lian C.G."/>
            <person name="Bierhals A.J."/>
            <person name="Vuzman D."/>
            <person name="Mecham R.P."/>
            <person name="Frank N.Y."/>
            <person name="Stitziel N.O."/>
        </authorList>
    </citation>
    <scope>VARIANT AAT10 ARG-298</scope>
    <scope>CHARACTERIZATION OF VARIANT AAT10 ARG-298</scope>
</reference>
<keyword id="KW-0993">Aortic aneurysm</keyword>
<keyword id="KW-0186">Copper</keyword>
<keyword id="KW-0225">Disease variant</keyword>
<keyword id="KW-1015">Disulfide bond</keyword>
<keyword id="KW-0325">Glycoprotein</keyword>
<keyword id="KW-0886">LTQ</keyword>
<keyword id="KW-0479">Metal-binding</keyword>
<keyword id="KW-0560">Oxidoreductase</keyword>
<keyword id="KW-1267">Proteomics identification</keyword>
<keyword id="KW-1185">Reference proteome</keyword>
<keyword id="KW-0964">Secreted</keyword>
<keyword id="KW-0732">Signal</keyword>
<keyword id="KW-0765">Sulfation</keyword>
<keyword id="KW-0801">TPQ</keyword>
<organism>
    <name type="scientific">Homo sapiens</name>
    <name type="common">Human</name>
    <dbReference type="NCBI Taxonomy" id="9606"/>
    <lineage>
        <taxon>Eukaryota</taxon>
        <taxon>Metazoa</taxon>
        <taxon>Chordata</taxon>
        <taxon>Craniata</taxon>
        <taxon>Vertebrata</taxon>
        <taxon>Euteleostomi</taxon>
        <taxon>Mammalia</taxon>
        <taxon>Eutheria</taxon>
        <taxon>Euarchontoglires</taxon>
        <taxon>Primates</taxon>
        <taxon>Haplorrhini</taxon>
        <taxon>Catarrhini</taxon>
        <taxon>Hominidae</taxon>
        <taxon>Homo</taxon>
    </lineage>
</organism>
<comment type="function">
    <text evidence="2 9">Responsible for the post-translational oxidative deamination of peptidyl lysine residues in precursors to fibrous collagen and elastin (PubMed:26838787). Regulator of Ras expression. May play a role in tumor suppression. Plays a role in the aortic wall architecture (By similarity).</text>
</comment>
<comment type="catalytic activity">
    <reaction evidence="9 11">
        <text>L-lysyl-[protein] + O2 + H2O = (S)-2-amino-6-oxohexanoyl-[protein] + H2O2 + NH4(+)</text>
        <dbReference type="Rhea" id="RHEA:24544"/>
        <dbReference type="Rhea" id="RHEA-COMP:9752"/>
        <dbReference type="Rhea" id="RHEA-COMP:12448"/>
        <dbReference type="ChEBI" id="CHEBI:15377"/>
        <dbReference type="ChEBI" id="CHEBI:15379"/>
        <dbReference type="ChEBI" id="CHEBI:16240"/>
        <dbReference type="ChEBI" id="CHEBI:28938"/>
        <dbReference type="ChEBI" id="CHEBI:29969"/>
        <dbReference type="ChEBI" id="CHEBI:131803"/>
        <dbReference type="EC" id="1.4.3.13"/>
    </reaction>
</comment>
<comment type="cofactor">
    <cofactor evidence="1">
        <name>Cu cation</name>
        <dbReference type="ChEBI" id="CHEBI:23378"/>
    </cofactor>
</comment>
<comment type="cofactor">
    <cofactor evidence="3">
        <name>lysine tyrosylquinone residue</name>
        <dbReference type="ChEBI" id="CHEBI:20489"/>
    </cofactor>
    <text evidence="3">Contains 1 lysine tyrosylquinone.</text>
</comment>
<comment type="subunit">
    <text evidence="7 8">Interacts with MFAP4 (PubMed:26601954). Interacts (via propeptide) with EFEMP2; this interaction is strong and facilitates formation of ternary complexes with ELN during elastic fiber assembly; this interaction limits interaction of EFEMP2 with FBLN5 (PubMed:19855011).</text>
</comment>
<comment type="interaction">
    <interactant intactId="EBI-3893481">
        <id>P28300</id>
    </interactant>
    <interactant intactId="EBI-743414">
        <id>O95967</id>
        <label>EFEMP2</label>
    </interactant>
    <organismsDiffer>false</organismsDiffer>
    <experiments>7</experiments>
</comment>
<comment type="interaction">
    <interactant intactId="EBI-3893481">
        <id>P28300</id>
    </interactant>
    <interactant intactId="EBI-1222108">
        <id>P15502</id>
        <label>ELN</label>
    </interactant>
    <organismsDiffer>false</organismsDiffer>
    <experiments>2</experiments>
</comment>
<comment type="interaction">
    <interactant intactId="EBI-3893481">
        <id>P28300</id>
    </interactant>
    <interactant intactId="EBI-947897">
        <id>Q9UBX5</id>
        <label>FBLN5</label>
    </interactant>
    <organismsDiffer>false</organismsDiffer>
    <experiments>2</experiments>
</comment>
<comment type="interaction">
    <interactant intactId="EBI-3893481">
        <id>P28300</id>
    </interactant>
    <interactant intactId="EBI-2505934">
        <id>P35555</id>
        <label>FBN1</label>
    </interactant>
    <organismsDiffer>false</organismsDiffer>
    <experiments>2</experiments>
</comment>
<comment type="interaction">
    <interactant intactId="EBI-3893481">
        <id>P28300</id>
    </interactant>
    <interactant intactId="EBI-474052">
        <id>Q15262</id>
        <label>PTPRK</label>
    </interactant>
    <organismsDiffer>false</organismsDiffer>
    <experiments>4</experiments>
</comment>
<comment type="interaction">
    <interactant intactId="EBI-20724846">
        <id>PRO_0000018520</id>
    </interactant>
    <interactant intactId="EBI-719535">
        <id>Q07507</id>
        <label>DPT</label>
    </interactant>
    <organismsDiffer>false</organismsDiffer>
    <experiments>2</experiments>
</comment>
<comment type="interaction">
    <interactant intactId="EBI-20724846">
        <id>PRO_0000018520</id>
    </interactant>
    <interactant intactId="EBI-9076336">
        <id>PRO_0000007541</id>
        <label>EGF</label>
        <dbReference type="UniProtKB" id="P01133"/>
    </interactant>
    <organismsDiffer>false</organismsDiffer>
    <experiments>2</experiments>
</comment>
<comment type="interaction">
    <interactant intactId="EBI-20724846">
        <id>PRO_0000018520</id>
    </interactant>
    <interactant intactId="EBI-1220319">
        <id>P02751</id>
        <label>FN1</label>
    </interactant>
    <organismsDiffer>false</organismsDiffer>
    <experiments>2</experiments>
</comment>
<comment type="interaction">
    <interactant intactId="EBI-20724846">
        <id>PRO_0000018520</id>
    </interactant>
    <interactant intactId="EBI-15482592">
        <id>PRO_0000390479</id>
        <label>FN1</label>
        <dbReference type="UniProtKB" id="P02751"/>
    </interactant>
    <organismsDiffer>false</organismsDiffer>
    <experiments>3</experiments>
</comment>
<comment type="interaction">
    <interactant intactId="EBI-20724846">
        <id>PRO_0000018520</id>
    </interactant>
    <interactant intactId="EBI-999394">
        <id>P00747</id>
        <label>PLG</label>
    </interactant>
    <organismsDiffer>false</organismsDiffer>
    <experiments>2</experiments>
</comment>
<comment type="interaction">
    <interactant intactId="EBI-20724846">
        <id>PRO_0000018520</id>
    </interactant>
    <interactant intactId="EBI-727668">
        <id>P21980</id>
        <label>TGM2</label>
    </interactant>
    <organismsDiffer>false</organismsDiffer>
    <experiments>3</experiments>
</comment>
<comment type="subcellular location">
    <subcellularLocation>
        <location evidence="11">Secreted</location>
    </subcellularLocation>
    <subcellularLocation>
        <location>Secreted</location>
        <location>Extracellular space</location>
    </subcellularLocation>
</comment>
<comment type="tissue specificity">
    <text evidence="12">Heart, placenta, skeletal muscle, kidney, lung and pancreas.</text>
</comment>
<comment type="PTM">
    <text evidence="3">The lysine tyrosylquinone cross-link (LTQ) is generated by condensation of the epsilon-amino group of a lysine with a topaquinone produced by oxidation of tyrosine.</text>
</comment>
<comment type="PTM">
    <text evidence="2 11">Proteolytically cleaved by BMP1 which removes the propeptide (PubMed:31152061). Also proteolytically cleaved by ADAMTS2 and ADAMTS14, but not by ADAMTS3, at an additional cleavage site downstream of the BMP1 cleavage site (PubMed:31152061). The propeptide plays a role in directing the deposition of this enzyme to elastic fibers, via interaction with tropoelastin (By similarity). Cleavage by BMP1 to remove the propeptide does not increase enzymatic activity but increases binding to collagen (PubMed:31152061). Cleavage by ADAMTS2 produces a form with reduced collagen-binding activity (PubMed:31152061).</text>
</comment>
<comment type="PTM">
    <text evidence="11">Sulfated at Tyr-187 and also at either Tyr-183 or Tyr-184 which enhances binding to collagen.</text>
</comment>
<comment type="disease" evidence="9 10">
    <disease id="DI-04842">
        <name>Aortic aneurysm, familial thoracic 10</name>
        <acronym>AAT10</acronym>
        <description>A form of thoracic aortic aneurysm, a disease characterized by permanent dilation of the thoracic aorta usually due to degenerative changes in the aortic wall. It is primarily associated with a characteristic histologic appearance known as 'medial necrosis' or 'Erdheim cystic medial necrosis' in which there is degeneration and fragmentation of elastic fibers, loss of smooth muscle cells, and an accumulation of basophilic ground substance.</description>
        <dbReference type="MIM" id="617168"/>
    </disease>
    <text>The disease is caused by variants affecting the gene represented in this entry.</text>
</comment>
<comment type="similarity">
    <text evidence="14">Belongs to the lysyl oxidase family.</text>
</comment>
<comment type="online information" name="Atlas of Genetics and Cytogenetics in Oncology and Haematology">
    <link uri="https://atlasgeneticsoncology.org/gene/41191/LOX"/>
</comment>
<name>LYOX_HUMAN</name>
<sequence>MRFAWTVLLLGPLQLCALVHCAPPAAGQQQPPREPPAAPGAWRQQIQWENNGQVFSLLSLGSQYQPQRRRDPGAAVPGAANASAQQPRTPILLIRDNRTAAARTRTAGSSGVTAGRPRPTARHWFQAGYSTSRAREAGASRAENQTAPGEVPALSNLRPPSRVDGMVGDDPYNPYKYSDDNPYYNYYDTYERPRPGGRYRPGYGTGYFQYGLPDLVADPYYIQASTYVQKMSMYNLRCAAEENCLASTAYRADVRDYDHRVLLRFPQRVKNQGTSDFLPSRPRYSWEWHSCHQHYHSMDEFSHYDLLDANTQRRVAEGHKASFCLEDTSCDYGYHRRFACTAHTQGLSPGCYDTYGADIDCQWIDITDVKPGNYILKVSVNPSYLVPESDYTNNVVRCDIRYTGHHAYASGCTISPY</sequence>
<dbReference type="EC" id="1.4.3.13" evidence="9 11"/>
<dbReference type="EMBL" id="S78694">
    <property type="protein sequence ID" value="AAB21243.1"/>
    <property type="molecule type" value="mRNA"/>
</dbReference>
<dbReference type="EMBL" id="M94054">
    <property type="protein sequence ID" value="AAA59525.1"/>
    <property type="molecule type" value="mRNA"/>
</dbReference>
<dbReference type="EMBL" id="S45875">
    <property type="protein sequence ID" value="AAB23549.1"/>
    <property type="molecule type" value="mRNA"/>
</dbReference>
<dbReference type="EMBL" id="AF039291">
    <property type="protein sequence ID" value="AAD02130.1"/>
    <property type="molecule type" value="mRNA"/>
</dbReference>
<dbReference type="EMBL" id="AK312269">
    <property type="protein sequence ID" value="BAG35200.1"/>
    <property type="molecule type" value="mRNA"/>
</dbReference>
<dbReference type="EMBL" id="BC074820">
    <property type="protein sequence ID" value="AAH74820.1"/>
    <property type="molecule type" value="mRNA"/>
</dbReference>
<dbReference type="EMBL" id="BC074872">
    <property type="protein sequence ID" value="AAH74872.1"/>
    <property type="molecule type" value="mRNA"/>
</dbReference>
<dbReference type="EMBL" id="BC089436">
    <property type="protein sequence ID" value="AAH89436.1"/>
    <property type="molecule type" value="mRNA"/>
</dbReference>
<dbReference type="EMBL" id="L16895">
    <property type="protein sequence ID" value="AAA16870.1"/>
    <property type="molecule type" value="Genomic_DNA"/>
</dbReference>
<dbReference type="EMBL" id="M84150">
    <property type="protein sequence ID" value="AAA59541.1"/>
    <property type="molecule type" value="Genomic_DNA"/>
</dbReference>
<dbReference type="CCDS" id="CCDS4129.1"/>
<dbReference type="PIR" id="A47529">
    <property type="entry name" value="OXHUL"/>
</dbReference>
<dbReference type="RefSeq" id="NP_002308.2">
    <property type="nucleotide sequence ID" value="NM_002317.6"/>
</dbReference>
<dbReference type="SMR" id="P28300"/>
<dbReference type="BioGRID" id="110199">
    <property type="interactions" value="56"/>
</dbReference>
<dbReference type="DIP" id="DIP-49007N"/>
<dbReference type="FunCoup" id="P28300">
    <property type="interactions" value="291"/>
</dbReference>
<dbReference type="IntAct" id="P28300">
    <property type="interactions" value="71"/>
</dbReference>
<dbReference type="MINT" id="P28300"/>
<dbReference type="STRING" id="9606.ENSP00000231004"/>
<dbReference type="BindingDB" id="P28300"/>
<dbReference type="ChEMBL" id="CHEMBL2249"/>
<dbReference type="DrugBank" id="DB09130">
    <property type="generic name" value="Copper"/>
</dbReference>
<dbReference type="DrugBank" id="DB06778">
    <property type="generic name" value="Cupric sulfate"/>
</dbReference>
<dbReference type="DrugCentral" id="P28300"/>
<dbReference type="GuidetoPHARMACOLOGY" id="3097"/>
<dbReference type="GlyConnect" id="816">
    <property type="glycosylation" value="13 N-Linked glycans (4 sites)"/>
</dbReference>
<dbReference type="GlyCosmos" id="P28300">
    <property type="glycosylation" value="6 sites, 16 glycans"/>
</dbReference>
<dbReference type="GlyGen" id="P28300">
    <property type="glycosylation" value="14 sites, 29 N-linked glycans (4 sites), 3 O-linked glycans (9 sites)"/>
</dbReference>
<dbReference type="iPTMnet" id="P28300"/>
<dbReference type="PhosphoSitePlus" id="P28300"/>
<dbReference type="BioMuta" id="LOX"/>
<dbReference type="jPOST" id="P28300"/>
<dbReference type="MassIVE" id="P28300"/>
<dbReference type="PaxDb" id="9606-ENSP00000231004"/>
<dbReference type="PeptideAtlas" id="P28300"/>
<dbReference type="ProteomicsDB" id="54461"/>
<dbReference type="Pumba" id="P28300"/>
<dbReference type="Antibodypedia" id="25606">
    <property type="antibodies" value="850 antibodies from 35 providers"/>
</dbReference>
<dbReference type="DNASU" id="4015"/>
<dbReference type="Ensembl" id="ENST00000231004.5">
    <property type="protein sequence ID" value="ENSP00000231004.4"/>
    <property type="gene ID" value="ENSG00000113083.15"/>
</dbReference>
<dbReference type="GeneID" id="4015"/>
<dbReference type="KEGG" id="hsa:4015"/>
<dbReference type="MANE-Select" id="ENST00000231004.5">
    <property type="protein sequence ID" value="ENSP00000231004.4"/>
    <property type="RefSeq nucleotide sequence ID" value="NM_002317.7"/>
    <property type="RefSeq protein sequence ID" value="NP_002308.2"/>
</dbReference>
<dbReference type="UCSC" id="uc003ksu.4">
    <property type="organism name" value="human"/>
</dbReference>
<dbReference type="AGR" id="HGNC:6664"/>
<dbReference type="CTD" id="4015"/>
<dbReference type="DisGeNET" id="4015"/>
<dbReference type="GeneCards" id="LOX"/>
<dbReference type="GeneReviews" id="LOX"/>
<dbReference type="HGNC" id="HGNC:6664">
    <property type="gene designation" value="LOX"/>
</dbReference>
<dbReference type="HPA" id="ENSG00000113083">
    <property type="expression patterns" value="Tissue enhanced (adipose)"/>
</dbReference>
<dbReference type="MalaCards" id="LOX"/>
<dbReference type="MIM" id="153455">
    <property type="type" value="gene"/>
</dbReference>
<dbReference type="MIM" id="617168">
    <property type="type" value="phenotype"/>
</dbReference>
<dbReference type="neXtProt" id="NX_P28300"/>
<dbReference type="OpenTargets" id="ENSG00000113083"/>
<dbReference type="Orphanet" id="91387">
    <property type="disease" value="Familial thoracic aortic aneurysm and aortic dissection"/>
</dbReference>
<dbReference type="PharmGKB" id="PA30427"/>
<dbReference type="VEuPathDB" id="HostDB:ENSG00000113083"/>
<dbReference type="eggNOG" id="ENOG502QWQR">
    <property type="taxonomic scope" value="Eukaryota"/>
</dbReference>
<dbReference type="GeneTree" id="ENSGT00940000154779"/>
<dbReference type="HOGENOM" id="CLU_002555_2_1_1"/>
<dbReference type="InParanoid" id="P28300"/>
<dbReference type="OMA" id="GCHMSTY"/>
<dbReference type="OrthoDB" id="547291at2759"/>
<dbReference type="PAN-GO" id="P28300">
    <property type="GO annotations" value="5 GO annotations based on evolutionary models"/>
</dbReference>
<dbReference type="PhylomeDB" id="P28300"/>
<dbReference type="TreeFam" id="TF326061"/>
<dbReference type="BRENDA" id="1.4.3.13">
    <property type="organism ID" value="2681"/>
</dbReference>
<dbReference type="PathwayCommons" id="P28300"/>
<dbReference type="Reactome" id="R-HSA-1566948">
    <property type="pathway name" value="Elastic fibre formation"/>
</dbReference>
<dbReference type="Reactome" id="R-HSA-2243919">
    <property type="pathway name" value="Crosslinking of collagen fibrils"/>
</dbReference>
<dbReference type="SignaLink" id="P28300"/>
<dbReference type="SIGNOR" id="P28300"/>
<dbReference type="BioGRID-ORCS" id="4015">
    <property type="hits" value="17 hits in 1161 CRISPR screens"/>
</dbReference>
<dbReference type="ChiTaRS" id="LOX">
    <property type="organism name" value="human"/>
</dbReference>
<dbReference type="GeneWiki" id="Lysyl_oxidase"/>
<dbReference type="GenomeRNAi" id="4015"/>
<dbReference type="Pharos" id="P28300">
    <property type="development level" value="Tchem"/>
</dbReference>
<dbReference type="PRO" id="PR:P28300"/>
<dbReference type="Proteomes" id="UP000005640">
    <property type="component" value="Chromosome 5"/>
</dbReference>
<dbReference type="RNAct" id="P28300">
    <property type="molecule type" value="protein"/>
</dbReference>
<dbReference type="Bgee" id="ENSG00000113083">
    <property type="expression patterns" value="Expressed in stromal cell of endometrium and 156 other cell types or tissues"/>
</dbReference>
<dbReference type="ExpressionAtlas" id="P28300">
    <property type="expression patterns" value="baseline and differential"/>
</dbReference>
<dbReference type="GO" id="GO:0005581">
    <property type="term" value="C:collagen trimer"/>
    <property type="evidence" value="ECO:0007669"/>
    <property type="project" value="Ensembl"/>
</dbReference>
<dbReference type="GO" id="GO:0062023">
    <property type="term" value="C:collagen-containing extracellular matrix"/>
    <property type="evidence" value="ECO:0000318"/>
    <property type="project" value="GO_Central"/>
</dbReference>
<dbReference type="GO" id="GO:0005576">
    <property type="term" value="C:extracellular region"/>
    <property type="evidence" value="ECO:0000250"/>
    <property type="project" value="UniProtKB"/>
</dbReference>
<dbReference type="GO" id="GO:0005615">
    <property type="term" value="C:extracellular space"/>
    <property type="evidence" value="ECO:0000314"/>
    <property type="project" value="UniProtKB"/>
</dbReference>
<dbReference type="GO" id="GO:0005518">
    <property type="term" value="F:collagen binding"/>
    <property type="evidence" value="ECO:0000314"/>
    <property type="project" value="UniProtKB"/>
</dbReference>
<dbReference type="GO" id="GO:0005507">
    <property type="term" value="F:copper ion binding"/>
    <property type="evidence" value="ECO:0000304"/>
    <property type="project" value="ProtInc"/>
</dbReference>
<dbReference type="GO" id="GO:0060090">
    <property type="term" value="F:molecular adaptor activity"/>
    <property type="evidence" value="ECO:0000353"/>
    <property type="project" value="DisProt"/>
</dbReference>
<dbReference type="GO" id="GO:0004720">
    <property type="term" value="F:protein-lysine 6-oxidase activity"/>
    <property type="evidence" value="ECO:0000314"/>
    <property type="project" value="UniProtKB"/>
</dbReference>
<dbReference type="GO" id="GO:0036094">
    <property type="term" value="F:small molecule binding"/>
    <property type="evidence" value="ECO:0000353"/>
    <property type="project" value="DisProt"/>
</dbReference>
<dbReference type="GO" id="GO:0035905">
    <property type="term" value="P:ascending aorta development"/>
    <property type="evidence" value="ECO:0007669"/>
    <property type="project" value="Ensembl"/>
</dbReference>
<dbReference type="GO" id="GO:0048514">
    <property type="term" value="P:blood vessel morphogenesis"/>
    <property type="evidence" value="ECO:0000250"/>
    <property type="project" value="UniProtKB"/>
</dbReference>
<dbReference type="GO" id="GO:0030282">
    <property type="term" value="P:bone mineralization"/>
    <property type="evidence" value="ECO:0007669"/>
    <property type="project" value="Ensembl"/>
</dbReference>
<dbReference type="GO" id="GO:0060326">
    <property type="term" value="P:cell chemotaxis"/>
    <property type="evidence" value="ECO:0007669"/>
    <property type="project" value="Ensembl"/>
</dbReference>
<dbReference type="GO" id="GO:1990869">
    <property type="term" value="P:cellular response to chemokine"/>
    <property type="evidence" value="ECO:0007669"/>
    <property type="project" value="Ensembl"/>
</dbReference>
<dbReference type="GO" id="GO:0030199">
    <property type="term" value="P:collagen fibril organization"/>
    <property type="evidence" value="ECO:0000318"/>
    <property type="project" value="GO_Central"/>
</dbReference>
<dbReference type="GO" id="GO:0061448">
    <property type="term" value="P:connective tissue development"/>
    <property type="evidence" value="ECO:0007669"/>
    <property type="project" value="Ensembl"/>
</dbReference>
<dbReference type="GO" id="GO:0035906">
    <property type="term" value="P:descending aorta development"/>
    <property type="evidence" value="ECO:0007669"/>
    <property type="project" value="Ensembl"/>
</dbReference>
<dbReference type="GO" id="GO:0071897">
    <property type="term" value="P:DNA biosynthetic process"/>
    <property type="evidence" value="ECO:0007669"/>
    <property type="project" value="Ensembl"/>
</dbReference>
<dbReference type="GO" id="GO:0048251">
    <property type="term" value="P:elastic fiber assembly"/>
    <property type="evidence" value="ECO:0007669"/>
    <property type="project" value="Ensembl"/>
</dbReference>
<dbReference type="GO" id="GO:0007507">
    <property type="term" value="P:heart development"/>
    <property type="evidence" value="ECO:0007669"/>
    <property type="project" value="Ensembl"/>
</dbReference>
<dbReference type="GO" id="GO:0030324">
    <property type="term" value="P:lung development"/>
    <property type="evidence" value="ECO:0007669"/>
    <property type="project" value="Ensembl"/>
</dbReference>
<dbReference type="GO" id="GO:0046716">
    <property type="term" value="P:muscle cell cellular homeostasis"/>
    <property type="evidence" value="ECO:0007669"/>
    <property type="project" value="Ensembl"/>
</dbReference>
<dbReference type="GO" id="GO:0055001">
    <property type="term" value="P:muscle cell development"/>
    <property type="evidence" value="ECO:0007669"/>
    <property type="project" value="Ensembl"/>
</dbReference>
<dbReference type="GO" id="GO:0051898">
    <property type="term" value="P:negative regulation of phosphatidylinositol 3-kinase/protein kinase B signal transduction"/>
    <property type="evidence" value="ECO:0007669"/>
    <property type="project" value="Ensembl"/>
</dbReference>
<dbReference type="GO" id="GO:0001649">
    <property type="term" value="P:osteoblast differentiation"/>
    <property type="evidence" value="ECO:0007669"/>
    <property type="project" value="Ensembl"/>
</dbReference>
<dbReference type="GO" id="GO:0018057">
    <property type="term" value="P:peptidyl-lysine oxidation"/>
    <property type="evidence" value="ECO:0000314"/>
    <property type="project" value="UniProtKB"/>
</dbReference>
<dbReference type="GO" id="GO:0035791">
    <property type="term" value="P:platelet-derived growth factor receptor-beta signaling pathway"/>
    <property type="evidence" value="ECO:0000318"/>
    <property type="project" value="GO_Central"/>
</dbReference>
<dbReference type="GO" id="GO:0036211">
    <property type="term" value="P:protein modification process"/>
    <property type="evidence" value="ECO:0000304"/>
    <property type="project" value="ProtInc"/>
</dbReference>
<dbReference type="GO" id="GO:0042981">
    <property type="term" value="P:regulation of apoptotic process"/>
    <property type="evidence" value="ECO:0007669"/>
    <property type="project" value="Ensembl"/>
</dbReference>
<dbReference type="GO" id="GO:1903010">
    <property type="term" value="P:regulation of bone development"/>
    <property type="evidence" value="ECO:0007669"/>
    <property type="project" value="Ensembl"/>
</dbReference>
<dbReference type="GO" id="GO:0010468">
    <property type="term" value="P:regulation of gene expression"/>
    <property type="evidence" value="ECO:0007669"/>
    <property type="project" value="Ensembl"/>
</dbReference>
<dbReference type="GO" id="GO:0045652">
    <property type="term" value="P:regulation of megakaryocyte differentiation"/>
    <property type="evidence" value="ECO:0007669"/>
    <property type="project" value="Ensembl"/>
</dbReference>
<dbReference type="GO" id="GO:2000586">
    <property type="term" value="P:regulation of platelet-derived growth factor receptor-beta signaling pathway"/>
    <property type="evidence" value="ECO:0007669"/>
    <property type="project" value="Ensembl"/>
</dbReference>
<dbReference type="GO" id="GO:0016202">
    <property type="term" value="P:regulation of striated muscle tissue development"/>
    <property type="evidence" value="ECO:0007669"/>
    <property type="project" value="Ensembl"/>
</dbReference>
<dbReference type="GO" id="GO:0017015">
    <property type="term" value="P:regulation of transforming growth factor beta receptor signaling pathway"/>
    <property type="evidence" value="ECO:0007669"/>
    <property type="project" value="Ensembl"/>
</dbReference>
<dbReference type="GO" id="GO:0048545">
    <property type="term" value="P:response to steroid hormone"/>
    <property type="evidence" value="ECO:0007669"/>
    <property type="project" value="Ensembl"/>
</dbReference>
<dbReference type="GO" id="GO:0009410">
    <property type="term" value="P:response to xenobiotic stimulus"/>
    <property type="evidence" value="ECO:0007669"/>
    <property type="project" value="Ensembl"/>
</dbReference>
<dbReference type="InterPro" id="IPR050912">
    <property type="entry name" value="LOX-like_protein"/>
</dbReference>
<dbReference type="InterPro" id="IPR001695">
    <property type="entry name" value="Lysyl_oxidase"/>
</dbReference>
<dbReference type="InterPro" id="IPR019828">
    <property type="entry name" value="Lysyl_oxidase_CS"/>
</dbReference>
<dbReference type="PANTHER" id="PTHR45817">
    <property type="entry name" value="LYSYL OXIDASE-LIKE-RELATED"/>
    <property type="match status" value="1"/>
</dbReference>
<dbReference type="PANTHER" id="PTHR45817:SF6">
    <property type="entry name" value="PROTEIN-LYSINE 6-OXIDASE"/>
    <property type="match status" value="1"/>
</dbReference>
<dbReference type="Pfam" id="PF01186">
    <property type="entry name" value="Lysyl_oxidase"/>
    <property type="match status" value="1"/>
</dbReference>
<dbReference type="PRINTS" id="PR00074">
    <property type="entry name" value="LYSYLOXIDASE"/>
</dbReference>
<dbReference type="PROSITE" id="PS00926">
    <property type="entry name" value="LYSYL_OXIDASE"/>
    <property type="match status" value="1"/>
</dbReference>
<feature type="signal peptide" evidence="1">
    <location>
        <begin position="1"/>
        <end position="21"/>
    </location>
</feature>
<feature type="propeptide" id="PRO_0000018520" description="Removed by BMP1" evidence="1">
    <location>
        <begin position="22"/>
        <end position="168"/>
    </location>
</feature>
<feature type="chain" id="PRO_0000018521" description="Protein-lysine 6-oxidase, long form" evidence="1">
    <location>
        <begin position="169"/>
        <end position="417"/>
    </location>
</feature>
<feature type="chain" id="PRO_0000447885" description="Protein-lysine 6-oxidase, short form" evidence="11">
    <location>
        <begin position="219"/>
        <end position="417"/>
    </location>
</feature>
<feature type="region of interest" description="Disordered" evidence="5">
    <location>
        <begin position="64"/>
        <end position="89"/>
    </location>
</feature>
<feature type="region of interest" description="Disordered" evidence="5">
    <location>
        <begin position="137"/>
        <end position="174"/>
    </location>
</feature>
<feature type="region of interest" description="Lysyl-oxidase like">
    <location>
        <begin position="213"/>
        <end position="417"/>
    </location>
</feature>
<feature type="compositionally biased region" description="Low complexity" evidence="5">
    <location>
        <begin position="73"/>
        <end position="84"/>
    </location>
</feature>
<feature type="binding site" evidence="4">
    <location>
        <position position="292"/>
    </location>
    <ligand>
        <name>Cu cation</name>
        <dbReference type="ChEBI" id="CHEBI:23378"/>
    </ligand>
</feature>
<feature type="binding site" evidence="4">
    <location>
        <position position="294"/>
    </location>
    <ligand>
        <name>Cu cation</name>
        <dbReference type="ChEBI" id="CHEBI:23378"/>
    </ligand>
</feature>
<feature type="binding site" evidence="4">
    <location>
        <position position="296"/>
    </location>
    <ligand>
        <name>Cu cation</name>
        <dbReference type="ChEBI" id="CHEBI:23378"/>
    </ligand>
</feature>
<feature type="site" description="Cleavage; by ADAMTS2 and ADAMTS14" evidence="11">
    <location>
        <begin position="218"/>
        <end position="219"/>
    </location>
</feature>
<feature type="modified residue" description="Sulfotyrosine" evidence="11">
    <location>
        <position position="187"/>
    </location>
</feature>
<feature type="modified residue" description="2',4',5'-topaquinone" evidence="3">
    <location>
        <position position="355"/>
    </location>
</feature>
<feature type="glycosylation site" description="N-linked (GlcNAc...) asparagine" evidence="4">
    <location>
        <position position="81"/>
    </location>
</feature>
<feature type="glycosylation site" description="N-linked (GlcNAc...) asparagine" evidence="4">
    <location>
        <position position="97"/>
    </location>
</feature>
<feature type="glycosylation site" description="N-linked (GlcNAc...) asparagine" evidence="4">
    <location>
        <position position="144"/>
    </location>
</feature>
<feature type="disulfide bond" evidence="3">
    <location>
        <begin position="238"/>
        <end position="244"/>
    </location>
</feature>
<feature type="disulfide bond" evidence="3">
    <location>
        <begin position="291"/>
        <end position="340"/>
    </location>
</feature>
<feature type="disulfide bond" evidence="3">
    <location>
        <begin position="324"/>
        <end position="330"/>
    </location>
</feature>
<feature type="disulfide bond" evidence="3">
    <location>
        <begin position="351"/>
        <end position="361"/>
    </location>
</feature>
<feature type="disulfide bond" evidence="3">
    <location>
        <begin position="398"/>
        <end position="412"/>
    </location>
</feature>
<feature type="cross-link" description="Lysine tyrosylquinone (Lys-Tyr)" evidence="3">
    <location>
        <begin position="320"/>
        <end position="355"/>
    </location>
</feature>
<feature type="sequence variant" id="VAR_077534" description="In AAT10; uncertain significance; dbSNP:rs752839330." evidence="9">
    <original>A</original>
    <variation>T</variation>
    <location>
        <position position="79"/>
    </location>
</feature>
<feature type="sequence variant" id="VAR_077535" description="In AAT10; uncertain significance; dbSNP:rs767855588." evidence="9">
    <original>L</original>
    <variation>F</variation>
    <location>
        <position position="154"/>
    </location>
</feature>
<feature type="sequence variant" id="VAR_004282" description="In dbSNP:rs1800449." evidence="6 13">
    <original>R</original>
    <variation>Q</variation>
    <location>
        <position position="158"/>
    </location>
</feature>
<feature type="sequence variant" id="VAR_077536" description="In AAT10; uncertain significance; 8% decrease of lysyl oxidase activity; dbSNP:rs1561420103." evidence="9">
    <original>T</original>
    <variation>I</variation>
    <location>
        <position position="248"/>
    </location>
</feature>
<feature type="sequence variant" id="VAR_077537" description="In AAT10; dbSNP:rs886040967." evidence="9">
    <original>Q</original>
    <variation>P</variation>
    <location>
        <position position="267"/>
    </location>
</feature>
<feature type="sequence variant" id="VAR_077538" description="In AAT10; 50% decrease of lysyl oxidase activity; dbSNP:rs886040965." evidence="9">
    <original>S</original>
    <variation>I</variation>
    <location>
        <position position="280"/>
    </location>
</feature>
<feature type="sequence variant" id="VAR_077539" description="In AAT10; dbSNP:rs876657852." evidence="10">
    <original>M</original>
    <variation>R</variation>
    <location>
        <position position="298"/>
    </location>
</feature>
<feature type="sequence variant" id="VAR_077540" description="In AAT10; 21% decrease of lysyl oxidase activity; dbSNP:rs1561417568." evidence="9">
    <original>S</original>
    <variation>R</variation>
    <location>
        <position position="348"/>
    </location>
</feature>
<feature type="mutagenesis site" description="Abolishes sulfation and reduces binding to collagen; when associated with 186-F-F-187 and F-190." evidence="11">
    <original>YY</original>
    <variation>FF</variation>
    <location>
        <begin position="183"/>
        <end position="184"/>
    </location>
</feature>
<feature type="mutagenesis site" description="Abolishes sulfation and reduces binding to collagen; when associated with 183-F-F-184 and F-190." evidence="11">
    <original>YY</original>
    <variation>FF</variation>
    <location>
        <begin position="186"/>
        <end position="187"/>
    </location>
</feature>
<feature type="mutagenesis site" description="Abolishes sulfation and reduces binding to collagen; when associated with 183-F-F-184 and 186-F-F-187." evidence="11">
    <original>Y</original>
    <variation>F</variation>
    <location>
        <position position="190"/>
    </location>
</feature>
<feature type="sequence conflict" description="In Ref. 3." evidence="14" ref="3">
    <original>Q</original>
    <variation>H</variation>
    <location>
        <position position="30"/>
    </location>
</feature>
<feature type="sequence conflict" description="In Ref. 3." evidence="14" ref="3">
    <original>P</original>
    <variation>A</variation>
    <location>
        <position position="31"/>
    </location>
</feature>
<feature type="sequence conflict" description="In Ref. 3." evidence="14" ref="3">
    <original>R</original>
    <variation>A</variation>
    <location>
        <position position="95"/>
    </location>
</feature>
<feature type="sequence conflict" description="In Ref. 1; AAB21243." evidence="14" ref="1">
    <original>A</original>
    <variation>G</variation>
    <location>
        <position position="102"/>
    </location>
</feature>
<feature type="sequence conflict" description="In Ref. 2; AAA59525/AAB23549." evidence="14" ref="2">
    <original>A</original>
    <variation>R</variation>
    <location>
        <position position="137"/>
    </location>
</feature>
<feature type="sequence conflict" description="In Ref. 1; AAB21243." evidence="14" ref="1">
    <original>A</original>
    <variation>P</variation>
    <location>
        <position position="139"/>
    </location>
</feature>
<feature type="sequence conflict" description="In Ref. 1; AAB21243." evidence="14" ref="1">
    <original>YD</original>
    <variation>LY</variation>
    <location>
        <begin position="304"/>
        <end position="305"/>
    </location>
</feature>
<feature type="sequence conflict" description="In Ref. 1; AAB21243." evidence="14" ref="1">
    <original>V</original>
    <variation>W</variation>
    <location>
        <position position="315"/>
    </location>
</feature>
<gene>
    <name type="primary">LOX</name>
</gene>
<protein>
    <recommendedName>
        <fullName>Protein-lysine 6-oxidase</fullName>
        <ecNumber evidence="9 11">1.4.3.13</ecNumber>
    </recommendedName>
    <alternativeName>
        <fullName>Lysyl oxidase</fullName>
    </alternativeName>
    <component>
        <recommendedName>
            <fullName evidence="15">Protein-lysine 6-oxidase, long form</fullName>
        </recommendedName>
    </component>
    <component>
        <recommendedName>
            <fullName evidence="15">Protein-lysine 6-oxidase, short form</fullName>
        </recommendedName>
    </component>
</protein>
<proteinExistence type="evidence at protein level"/>
<accession>P28300</accession>
<accession>B2R5Q3</accession>
<accession>Q5FWF0</accession>